<feature type="chain" id="PRO_0000278015" description="Large ribosomal subunit protein bL33">
    <location>
        <begin position="1"/>
        <end position="56"/>
    </location>
</feature>
<protein>
    <recommendedName>
        <fullName evidence="1">Large ribosomal subunit protein bL33</fullName>
    </recommendedName>
    <alternativeName>
        <fullName evidence="2">50S ribosomal protein L33</fullName>
    </alternativeName>
</protein>
<organism>
    <name type="scientific">Rickettsia felis (strain ATCC VR-1525 / URRWXCal2)</name>
    <name type="common">Rickettsia azadi</name>
    <dbReference type="NCBI Taxonomy" id="315456"/>
    <lineage>
        <taxon>Bacteria</taxon>
        <taxon>Pseudomonadati</taxon>
        <taxon>Pseudomonadota</taxon>
        <taxon>Alphaproteobacteria</taxon>
        <taxon>Rickettsiales</taxon>
        <taxon>Rickettsiaceae</taxon>
        <taxon>Rickettsieae</taxon>
        <taxon>Rickettsia</taxon>
        <taxon>spotted fever group</taxon>
    </lineage>
</organism>
<proteinExistence type="inferred from homology"/>
<evidence type="ECO:0000255" key="1">
    <source>
        <dbReference type="HAMAP-Rule" id="MF_00294"/>
    </source>
</evidence>
<evidence type="ECO:0000305" key="2"/>
<reference key="1">
    <citation type="journal article" date="2005" name="PLoS Biol.">
        <title>The genome sequence of Rickettsia felis identifies the first putative conjugative plasmid in an obligate intracellular parasite.</title>
        <authorList>
            <person name="Ogata H."/>
            <person name="Renesto P."/>
            <person name="Audic S."/>
            <person name="Robert C."/>
            <person name="Blanc G."/>
            <person name="Fournier P.-E."/>
            <person name="Parinello H."/>
            <person name="Claverie J.-M."/>
            <person name="Raoult D."/>
        </authorList>
    </citation>
    <scope>NUCLEOTIDE SEQUENCE [LARGE SCALE GENOMIC DNA]</scope>
    <source>
        <strain>ATCC VR-1525 / URRWXCal2</strain>
    </source>
</reference>
<dbReference type="EMBL" id="CP000053">
    <property type="protein sequence ID" value="AAY62237.1"/>
    <property type="molecule type" value="Genomic_DNA"/>
</dbReference>
<dbReference type="SMR" id="Q4UJQ2"/>
<dbReference type="STRING" id="315456.RF_1386"/>
<dbReference type="KEGG" id="rfe:RF_1386"/>
<dbReference type="eggNOG" id="COG0267">
    <property type="taxonomic scope" value="Bacteria"/>
</dbReference>
<dbReference type="HOGENOM" id="CLU_190949_1_0_5"/>
<dbReference type="OrthoDB" id="21586at2"/>
<dbReference type="Proteomes" id="UP000008548">
    <property type="component" value="Chromosome"/>
</dbReference>
<dbReference type="GO" id="GO:0005737">
    <property type="term" value="C:cytoplasm"/>
    <property type="evidence" value="ECO:0007669"/>
    <property type="project" value="UniProtKB-ARBA"/>
</dbReference>
<dbReference type="GO" id="GO:0015934">
    <property type="term" value="C:large ribosomal subunit"/>
    <property type="evidence" value="ECO:0007669"/>
    <property type="project" value="TreeGrafter"/>
</dbReference>
<dbReference type="GO" id="GO:0003735">
    <property type="term" value="F:structural constituent of ribosome"/>
    <property type="evidence" value="ECO:0007669"/>
    <property type="project" value="InterPro"/>
</dbReference>
<dbReference type="GO" id="GO:0006412">
    <property type="term" value="P:translation"/>
    <property type="evidence" value="ECO:0007669"/>
    <property type="project" value="UniProtKB-UniRule"/>
</dbReference>
<dbReference type="Gene3D" id="2.20.28.120">
    <property type="entry name" value="Ribosomal protein L33"/>
    <property type="match status" value="1"/>
</dbReference>
<dbReference type="HAMAP" id="MF_00294">
    <property type="entry name" value="Ribosomal_bL33"/>
    <property type="match status" value="1"/>
</dbReference>
<dbReference type="InterPro" id="IPR001705">
    <property type="entry name" value="Ribosomal_bL33"/>
</dbReference>
<dbReference type="InterPro" id="IPR018264">
    <property type="entry name" value="Ribosomal_bL33_CS"/>
</dbReference>
<dbReference type="InterPro" id="IPR038584">
    <property type="entry name" value="Ribosomal_bL33_sf"/>
</dbReference>
<dbReference type="InterPro" id="IPR011332">
    <property type="entry name" value="Ribosomal_zn-bd"/>
</dbReference>
<dbReference type="NCBIfam" id="NF001860">
    <property type="entry name" value="PRK00595.1"/>
    <property type="match status" value="1"/>
</dbReference>
<dbReference type="NCBIfam" id="TIGR01023">
    <property type="entry name" value="rpmG_bact"/>
    <property type="match status" value="1"/>
</dbReference>
<dbReference type="PANTHER" id="PTHR15238">
    <property type="entry name" value="54S RIBOSOMAL PROTEIN L39, MITOCHONDRIAL"/>
    <property type="match status" value="1"/>
</dbReference>
<dbReference type="PANTHER" id="PTHR15238:SF1">
    <property type="entry name" value="LARGE RIBOSOMAL SUBUNIT PROTEIN BL33M"/>
    <property type="match status" value="1"/>
</dbReference>
<dbReference type="Pfam" id="PF00471">
    <property type="entry name" value="Ribosomal_L33"/>
    <property type="match status" value="1"/>
</dbReference>
<dbReference type="SUPFAM" id="SSF57829">
    <property type="entry name" value="Zn-binding ribosomal proteins"/>
    <property type="match status" value="1"/>
</dbReference>
<dbReference type="PROSITE" id="PS00582">
    <property type="entry name" value="RIBOSOMAL_L33"/>
    <property type="match status" value="1"/>
</dbReference>
<sequence>MAKKNKNVLVRLVSTAGTGVFWVKKRNPKTQTEKLSFRKYDKVVRKHVLFKEEKIK</sequence>
<gene>
    <name evidence="1" type="primary">rpmG</name>
    <name type="ordered locus">RF_1386</name>
</gene>
<name>RL33_RICFE</name>
<comment type="similarity">
    <text evidence="1">Belongs to the bacterial ribosomal protein bL33 family.</text>
</comment>
<keyword id="KW-0687">Ribonucleoprotein</keyword>
<keyword id="KW-0689">Ribosomal protein</keyword>
<accession>Q4UJQ2</accession>